<reference key="1">
    <citation type="submission" date="2008-01" db="EMBL/GenBank/DDBJ databases">
        <title>Complete sequence of Thermoanaerobacter sp. X514.</title>
        <authorList>
            <consortium name="US DOE Joint Genome Institute"/>
            <person name="Copeland A."/>
            <person name="Lucas S."/>
            <person name="Lapidus A."/>
            <person name="Barry K."/>
            <person name="Glavina del Rio T."/>
            <person name="Dalin E."/>
            <person name="Tice H."/>
            <person name="Pitluck S."/>
            <person name="Bruce D."/>
            <person name="Goodwin L."/>
            <person name="Saunders E."/>
            <person name="Brettin T."/>
            <person name="Detter J.C."/>
            <person name="Han C."/>
            <person name="Schmutz J."/>
            <person name="Larimer F."/>
            <person name="Land M."/>
            <person name="Hauser L."/>
            <person name="Kyrpides N."/>
            <person name="Kim E."/>
            <person name="Hemme C."/>
            <person name="Fields M.W."/>
            <person name="He Z."/>
            <person name="Zhou J."/>
            <person name="Richardson P."/>
        </authorList>
    </citation>
    <scope>NUCLEOTIDE SEQUENCE [LARGE SCALE GENOMIC DNA]</scope>
    <source>
        <strain>X514</strain>
    </source>
</reference>
<gene>
    <name evidence="1" type="primary">rplL</name>
    <name type="ordered locus">Teth514_0858</name>
</gene>
<comment type="function">
    <text evidence="1">Forms part of the ribosomal stalk which helps the ribosome interact with GTP-bound translation factors. Is thus essential for accurate translation.</text>
</comment>
<comment type="subunit">
    <text evidence="1">Homodimer. Part of the ribosomal stalk of the 50S ribosomal subunit. Forms a multimeric L10(L12)X complex, where L10 forms an elongated spine to which 2 to 4 L12 dimers bind in a sequential fashion. Binds GTP-bound translation factors.</text>
</comment>
<comment type="similarity">
    <text evidence="1">Belongs to the bacterial ribosomal protein bL12 family.</text>
</comment>
<dbReference type="EMBL" id="CP000923">
    <property type="protein sequence ID" value="ABY92160.1"/>
    <property type="molecule type" value="Genomic_DNA"/>
</dbReference>
<dbReference type="RefSeq" id="WP_003868698.1">
    <property type="nucleotide sequence ID" value="NC_010320.1"/>
</dbReference>
<dbReference type="SMR" id="B0K5G7"/>
<dbReference type="KEGG" id="tex:Teth514_0858"/>
<dbReference type="HOGENOM" id="CLU_086499_3_2_9"/>
<dbReference type="Proteomes" id="UP000002155">
    <property type="component" value="Chromosome"/>
</dbReference>
<dbReference type="GO" id="GO:0022625">
    <property type="term" value="C:cytosolic large ribosomal subunit"/>
    <property type="evidence" value="ECO:0007669"/>
    <property type="project" value="TreeGrafter"/>
</dbReference>
<dbReference type="GO" id="GO:0003729">
    <property type="term" value="F:mRNA binding"/>
    <property type="evidence" value="ECO:0007669"/>
    <property type="project" value="TreeGrafter"/>
</dbReference>
<dbReference type="GO" id="GO:0003735">
    <property type="term" value="F:structural constituent of ribosome"/>
    <property type="evidence" value="ECO:0007669"/>
    <property type="project" value="InterPro"/>
</dbReference>
<dbReference type="GO" id="GO:0006412">
    <property type="term" value="P:translation"/>
    <property type="evidence" value="ECO:0007669"/>
    <property type="project" value="UniProtKB-UniRule"/>
</dbReference>
<dbReference type="CDD" id="cd00387">
    <property type="entry name" value="Ribosomal_L7_L12"/>
    <property type="match status" value="1"/>
</dbReference>
<dbReference type="FunFam" id="1.20.5.710:FF:000008">
    <property type="entry name" value="50S ribosomal protein L7/L12"/>
    <property type="match status" value="1"/>
</dbReference>
<dbReference type="FunFam" id="3.30.1390.10:FF:000001">
    <property type="entry name" value="50S ribosomal protein L7/L12"/>
    <property type="match status" value="1"/>
</dbReference>
<dbReference type="Gene3D" id="3.30.1390.10">
    <property type="match status" value="1"/>
</dbReference>
<dbReference type="Gene3D" id="1.20.5.710">
    <property type="entry name" value="Single helix bin"/>
    <property type="match status" value="1"/>
</dbReference>
<dbReference type="HAMAP" id="MF_00368">
    <property type="entry name" value="Ribosomal_bL12"/>
    <property type="match status" value="1"/>
</dbReference>
<dbReference type="InterPro" id="IPR000206">
    <property type="entry name" value="Ribosomal_bL12"/>
</dbReference>
<dbReference type="InterPro" id="IPR013823">
    <property type="entry name" value="Ribosomal_bL12_C"/>
</dbReference>
<dbReference type="InterPro" id="IPR014719">
    <property type="entry name" value="Ribosomal_bL12_C/ClpS-like"/>
</dbReference>
<dbReference type="InterPro" id="IPR008932">
    <property type="entry name" value="Ribosomal_bL12_oligo"/>
</dbReference>
<dbReference type="InterPro" id="IPR036235">
    <property type="entry name" value="Ribosomal_bL12_oligo_N_sf"/>
</dbReference>
<dbReference type="NCBIfam" id="TIGR00855">
    <property type="entry name" value="L12"/>
    <property type="match status" value="1"/>
</dbReference>
<dbReference type="PANTHER" id="PTHR45987">
    <property type="entry name" value="39S RIBOSOMAL PROTEIN L12"/>
    <property type="match status" value="1"/>
</dbReference>
<dbReference type="PANTHER" id="PTHR45987:SF4">
    <property type="entry name" value="LARGE RIBOSOMAL SUBUNIT PROTEIN BL12M"/>
    <property type="match status" value="1"/>
</dbReference>
<dbReference type="Pfam" id="PF00542">
    <property type="entry name" value="Ribosomal_L12"/>
    <property type="match status" value="1"/>
</dbReference>
<dbReference type="Pfam" id="PF16320">
    <property type="entry name" value="Ribosomal_L12_N"/>
    <property type="match status" value="1"/>
</dbReference>
<dbReference type="SUPFAM" id="SSF54736">
    <property type="entry name" value="ClpS-like"/>
    <property type="match status" value="1"/>
</dbReference>
<dbReference type="SUPFAM" id="SSF48300">
    <property type="entry name" value="Ribosomal protein L7/12, oligomerisation (N-terminal) domain"/>
    <property type="match status" value="1"/>
</dbReference>
<proteinExistence type="inferred from homology"/>
<feature type="chain" id="PRO_1000121500" description="Large ribosomal subunit protein bL12">
    <location>
        <begin position="1"/>
        <end position="125"/>
    </location>
</feature>
<organism>
    <name type="scientific">Thermoanaerobacter sp. (strain X514)</name>
    <dbReference type="NCBI Taxonomy" id="399726"/>
    <lineage>
        <taxon>Bacteria</taxon>
        <taxon>Bacillati</taxon>
        <taxon>Bacillota</taxon>
        <taxon>Clostridia</taxon>
        <taxon>Thermoanaerobacterales</taxon>
        <taxon>Thermoanaerobacteraceae</taxon>
        <taxon>Thermoanaerobacter</taxon>
    </lineage>
</organism>
<sequence length="125" mass="13137">MSKEEILEAIKNMTVLELAELVKALEEEFGVSAAAPVAVAAAPAAGAPAAAPAEEKTEFDVILQEVGSDKIKVIKVVREVTGLGLKEAKDLVESAPKPVKEGVSKDEANQIKAKFEEVGAKVEIK</sequence>
<keyword id="KW-0687">Ribonucleoprotein</keyword>
<keyword id="KW-0689">Ribosomal protein</keyword>
<evidence type="ECO:0000255" key="1">
    <source>
        <dbReference type="HAMAP-Rule" id="MF_00368"/>
    </source>
</evidence>
<evidence type="ECO:0000305" key="2"/>
<name>RL7_THEPX</name>
<accession>B0K5G7</accession>
<protein>
    <recommendedName>
        <fullName evidence="1">Large ribosomal subunit protein bL12</fullName>
    </recommendedName>
    <alternativeName>
        <fullName evidence="2">50S ribosomal protein L7/L12</fullName>
    </alternativeName>
</protein>